<dbReference type="EC" id="1.4.3.5" evidence="1"/>
<dbReference type="EMBL" id="CP000361">
    <property type="protein sequence ID" value="ABV67790.1"/>
    <property type="molecule type" value="Genomic_DNA"/>
</dbReference>
<dbReference type="RefSeq" id="WP_012013175.1">
    <property type="nucleotide sequence ID" value="NC_009850.1"/>
</dbReference>
<dbReference type="SMR" id="A8EV17"/>
<dbReference type="STRING" id="367737.Abu_1541"/>
<dbReference type="GeneID" id="24304073"/>
<dbReference type="KEGG" id="abu:Abu_1541"/>
<dbReference type="eggNOG" id="COG0259">
    <property type="taxonomic scope" value="Bacteria"/>
</dbReference>
<dbReference type="HOGENOM" id="CLU_032263_2_2_7"/>
<dbReference type="UniPathway" id="UPA01068">
    <property type="reaction ID" value="UER00304"/>
</dbReference>
<dbReference type="UniPathway" id="UPA01068">
    <property type="reaction ID" value="UER00305"/>
</dbReference>
<dbReference type="Proteomes" id="UP000001136">
    <property type="component" value="Chromosome"/>
</dbReference>
<dbReference type="GO" id="GO:0010181">
    <property type="term" value="F:FMN binding"/>
    <property type="evidence" value="ECO:0007669"/>
    <property type="project" value="InterPro"/>
</dbReference>
<dbReference type="GO" id="GO:0004733">
    <property type="term" value="F:pyridoxamine phosphate oxidase activity"/>
    <property type="evidence" value="ECO:0007669"/>
    <property type="project" value="UniProtKB-EC"/>
</dbReference>
<dbReference type="GO" id="GO:0008615">
    <property type="term" value="P:pyridoxine biosynthetic process"/>
    <property type="evidence" value="ECO:0007669"/>
    <property type="project" value="UniProtKB-KW"/>
</dbReference>
<dbReference type="FunFam" id="2.30.110.10:FF:000020">
    <property type="entry name" value="PNPO isoform 11"/>
    <property type="match status" value="1"/>
</dbReference>
<dbReference type="Gene3D" id="2.30.110.10">
    <property type="entry name" value="Electron Transport, Fmn-binding Protein, Chain A"/>
    <property type="match status" value="1"/>
</dbReference>
<dbReference type="HAMAP" id="MF_01629">
    <property type="entry name" value="PdxH"/>
    <property type="match status" value="1"/>
</dbReference>
<dbReference type="InterPro" id="IPR000659">
    <property type="entry name" value="Pyridox_Oxase"/>
</dbReference>
<dbReference type="InterPro" id="IPR019740">
    <property type="entry name" value="Pyridox_Oxase_CS"/>
</dbReference>
<dbReference type="InterPro" id="IPR011576">
    <property type="entry name" value="Pyridox_Oxase_N"/>
</dbReference>
<dbReference type="InterPro" id="IPR019576">
    <property type="entry name" value="Pyridoxamine_oxidase_dimer_C"/>
</dbReference>
<dbReference type="InterPro" id="IPR012349">
    <property type="entry name" value="Split_barrel_FMN-bd"/>
</dbReference>
<dbReference type="NCBIfam" id="TIGR00558">
    <property type="entry name" value="pdxH"/>
    <property type="match status" value="1"/>
</dbReference>
<dbReference type="NCBIfam" id="NF004231">
    <property type="entry name" value="PRK05679.1"/>
    <property type="match status" value="1"/>
</dbReference>
<dbReference type="PANTHER" id="PTHR10851:SF0">
    <property type="entry name" value="PYRIDOXINE-5'-PHOSPHATE OXIDASE"/>
    <property type="match status" value="1"/>
</dbReference>
<dbReference type="PANTHER" id="PTHR10851">
    <property type="entry name" value="PYRIDOXINE-5-PHOSPHATE OXIDASE"/>
    <property type="match status" value="1"/>
</dbReference>
<dbReference type="Pfam" id="PF10590">
    <property type="entry name" value="PNP_phzG_C"/>
    <property type="match status" value="1"/>
</dbReference>
<dbReference type="Pfam" id="PF01243">
    <property type="entry name" value="PNPOx_N"/>
    <property type="match status" value="1"/>
</dbReference>
<dbReference type="PIRSF" id="PIRSF000190">
    <property type="entry name" value="Pyd_amn-ph_oxd"/>
    <property type="match status" value="1"/>
</dbReference>
<dbReference type="SUPFAM" id="SSF50475">
    <property type="entry name" value="FMN-binding split barrel"/>
    <property type="match status" value="1"/>
</dbReference>
<dbReference type="PROSITE" id="PS01064">
    <property type="entry name" value="PYRIDOX_OXIDASE"/>
    <property type="match status" value="1"/>
</dbReference>
<comment type="function">
    <text evidence="1">Catalyzes the oxidation of either pyridoxine 5'-phosphate (PNP) or pyridoxamine 5'-phosphate (PMP) into pyridoxal 5'-phosphate (PLP).</text>
</comment>
<comment type="catalytic activity">
    <reaction evidence="1">
        <text>pyridoxamine 5'-phosphate + O2 + H2O = pyridoxal 5'-phosphate + H2O2 + NH4(+)</text>
        <dbReference type="Rhea" id="RHEA:15817"/>
        <dbReference type="ChEBI" id="CHEBI:15377"/>
        <dbReference type="ChEBI" id="CHEBI:15379"/>
        <dbReference type="ChEBI" id="CHEBI:16240"/>
        <dbReference type="ChEBI" id="CHEBI:28938"/>
        <dbReference type="ChEBI" id="CHEBI:58451"/>
        <dbReference type="ChEBI" id="CHEBI:597326"/>
        <dbReference type="EC" id="1.4.3.5"/>
    </reaction>
</comment>
<comment type="catalytic activity">
    <reaction evidence="1">
        <text>pyridoxine 5'-phosphate + O2 = pyridoxal 5'-phosphate + H2O2</text>
        <dbReference type="Rhea" id="RHEA:15149"/>
        <dbReference type="ChEBI" id="CHEBI:15379"/>
        <dbReference type="ChEBI" id="CHEBI:16240"/>
        <dbReference type="ChEBI" id="CHEBI:58589"/>
        <dbReference type="ChEBI" id="CHEBI:597326"/>
        <dbReference type="EC" id="1.4.3.5"/>
    </reaction>
</comment>
<comment type="cofactor">
    <cofactor evidence="1">
        <name>FMN</name>
        <dbReference type="ChEBI" id="CHEBI:58210"/>
    </cofactor>
    <text evidence="1">Binds 1 FMN per subunit.</text>
</comment>
<comment type="pathway">
    <text evidence="1">Cofactor metabolism; pyridoxal 5'-phosphate salvage; pyridoxal 5'-phosphate from pyridoxamine 5'-phosphate: step 1/1.</text>
</comment>
<comment type="pathway">
    <text evidence="1">Cofactor metabolism; pyridoxal 5'-phosphate salvage; pyridoxal 5'-phosphate from pyridoxine 5'-phosphate: step 1/1.</text>
</comment>
<comment type="subunit">
    <text evidence="1">Homodimer.</text>
</comment>
<comment type="similarity">
    <text evidence="1">Belongs to the pyridoxamine 5'-phosphate oxidase family.</text>
</comment>
<gene>
    <name evidence="1" type="primary">pdxH</name>
    <name type="ordered locus">Abu_1541</name>
</gene>
<keyword id="KW-0285">Flavoprotein</keyword>
<keyword id="KW-0288">FMN</keyword>
<keyword id="KW-0560">Oxidoreductase</keyword>
<keyword id="KW-0664">Pyridoxine biosynthesis</keyword>
<keyword id="KW-1185">Reference proteome</keyword>
<sequence>MDLTNLRAKYTTRGLDIKDLDQNPFKQFETWFNEAIEAKLTEPNAFSLATVGKDMMPSIRTVLLKIFDEKGFVFFTNYKSTKANQIKENPKAAALFPWLDLERQVKIEGDIQKISTTESLKYFLSRPKGSQIGAWVSHQSQVISSRSLLEQKFDEIKNKFVNGEVPFPSFWGGYIIKPTKIEFWQGGQDRLHDRFLYELKENGAWSISRLAP</sequence>
<reference key="1">
    <citation type="journal article" date="2007" name="PLoS ONE">
        <title>The complete genome sequence and analysis of the Epsilonproteobacterium Arcobacter butzleri.</title>
        <authorList>
            <person name="Miller W.G."/>
            <person name="Parker C.T."/>
            <person name="Rubenfield M."/>
            <person name="Mendz G.L."/>
            <person name="Woesten M.M.S.M."/>
            <person name="Ussery D.W."/>
            <person name="Stolz J.F."/>
            <person name="Binnewies T.T."/>
            <person name="Hallin P.F."/>
            <person name="Wang G."/>
            <person name="Malek J.A."/>
            <person name="Rogosin A."/>
            <person name="Stanker L.H."/>
            <person name="Mandrell R.E."/>
        </authorList>
    </citation>
    <scope>NUCLEOTIDE SEQUENCE [LARGE SCALE GENOMIC DNA]</scope>
    <source>
        <strain>RM4018</strain>
    </source>
</reference>
<accession>A8EV17</accession>
<proteinExistence type="inferred from homology"/>
<protein>
    <recommendedName>
        <fullName evidence="1">Pyridoxine/pyridoxamine 5'-phosphate oxidase</fullName>
        <ecNumber evidence="1">1.4.3.5</ecNumber>
    </recommendedName>
    <alternativeName>
        <fullName evidence="1">PNP/PMP oxidase</fullName>
        <shortName evidence="1">PNPOx</shortName>
    </alternativeName>
    <alternativeName>
        <fullName evidence="1">Pyridoxal 5'-phosphate synthase</fullName>
    </alternativeName>
</protein>
<feature type="chain" id="PRO_0000335779" description="Pyridoxine/pyridoxamine 5'-phosphate oxidase">
    <location>
        <begin position="1"/>
        <end position="212"/>
    </location>
</feature>
<feature type="binding site" evidence="1">
    <location>
        <begin position="7"/>
        <end position="10"/>
    </location>
    <ligand>
        <name>substrate</name>
    </ligand>
</feature>
<feature type="binding site" evidence="1">
    <location>
        <begin position="60"/>
        <end position="65"/>
    </location>
    <ligand>
        <name>FMN</name>
        <dbReference type="ChEBI" id="CHEBI:58210"/>
    </ligand>
</feature>
<feature type="binding site" evidence="1">
    <location>
        <position position="65"/>
    </location>
    <ligand>
        <name>substrate</name>
    </ligand>
</feature>
<feature type="binding site" evidence="1">
    <location>
        <begin position="75"/>
        <end position="76"/>
    </location>
    <ligand>
        <name>FMN</name>
        <dbReference type="ChEBI" id="CHEBI:58210"/>
    </ligand>
</feature>
<feature type="binding site" evidence="1">
    <location>
        <position position="82"/>
    </location>
    <ligand>
        <name>FMN</name>
        <dbReference type="ChEBI" id="CHEBI:58210"/>
    </ligand>
</feature>
<feature type="binding site" evidence="1">
    <location>
        <position position="104"/>
    </location>
    <ligand>
        <name>FMN</name>
        <dbReference type="ChEBI" id="CHEBI:58210"/>
    </ligand>
</feature>
<feature type="binding site" evidence="1">
    <location>
        <position position="122"/>
    </location>
    <ligand>
        <name>substrate</name>
    </ligand>
</feature>
<feature type="binding site" evidence="1">
    <location>
        <position position="126"/>
    </location>
    <ligand>
        <name>substrate</name>
    </ligand>
</feature>
<feature type="binding site" evidence="1">
    <location>
        <position position="130"/>
    </location>
    <ligand>
        <name>substrate</name>
    </ligand>
</feature>
<feature type="binding site" evidence="1">
    <location>
        <begin position="139"/>
        <end position="140"/>
    </location>
    <ligand>
        <name>FMN</name>
        <dbReference type="ChEBI" id="CHEBI:58210"/>
    </ligand>
</feature>
<feature type="binding site" evidence="1">
    <location>
        <position position="184"/>
    </location>
    <ligand>
        <name>FMN</name>
        <dbReference type="ChEBI" id="CHEBI:58210"/>
    </ligand>
</feature>
<feature type="binding site" evidence="1">
    <location>
        <begin position="190"/>
        <end position="192"/>
    </location>
    <ligand>
        <name>substrate</name>
    </ligand>
</feature>
<feature type="binding site" evidence="1">
    <location>
        <position position="194"/>
    </location>
    <ligand>
        <name>FMN</name>
        <dbReference type="ChEBI" id="CHEBI:58210"/>
    </ligand>
</feature>
<organism>
    <name type="scientific">Aliarcobacter butzleri (strain RM4018)</name>
    <name type="common">Arcobacter butzleri</name>
    <dbReference type="NCBI Taxonomy" id="367737"/>
    <lineage>
        <taxon>Bacteria</taxon>
        <taxon>Pseudomonadati</taxon>
        <taxon>Campylobacterota</taxon>
        <taxon>Epsilonproteobacteria</taxon>
        <taxon>Campylobacterales</taxon>
        <taxon>Arcobacteraceae</taxon>
        <taxon>Aliarcobacter</taxon>
    </lineage>
</organism>
<name>PDXH_ALIB4</name>
<evidence type="ECO:0000255" key="1">
    <source>
        <dbReference type="HAMAP-Rule" id="MF_01629"/>
    </source>
</evidence>